<dbReference type="EMBL" id="M74904">
    <property type="protein sequence ID" value="AAA46242.1"/>
    <property type="molecule type" value="Genomic_RNA"/>
</dbReference>
<dbReference type="PIR" id="B42544">
    <property type="entry name" value="B42544"/>
</dbReference>
<dbReference type="RefSeq" id="NP_619691.1">
    <property type="nucleotide sequence ID" value="NC_003616.1"/>
</dbReference>
<dbReference type="SMR" id="Q01260"/>
<dbReference type="GlyCosmos" id="Q01260">
    <property type="glycosylation" value="7 sites, No reported glycans"/>
</dbReference>
<dbReference type="KEGG" id="vg:956573"/>
<dbReference type="Proteomes" id="UP000201303">
    <property type="component" value="Genome"/>
</dbReference>
<dbReference type="GO" id="GO:0044167">
    <property type="term" value="C:host cell endoplasmic reticulum membrane"/>
    <property type="evidence" value="ECO:0007669"/>
    <property type="project" value="UniProtKB-SubCell"/>
</dbReference>
<dbReference type="GO" id="GO:0044178">
    <property type="term" value="C:host cell Golgi membrane"/>
    <property type="evidence" value="ECO:0007669"/>
    <property type="project" value="UniProtKB-SubCell"/>
</dbReference>
<dbReference type="GO" id="GO:0016020">
    <property type="term" value="C:membrane"/>
    <property type="evidence" value="ECO:0007669"/>
    <property type="project" value="UniProtKB-KW"/>
</dbReference>
<dbReference type="GO" id="GO:0055036">
    <property type="term" value="C:virion membrane"/>
    <property type="evidence" value="ECO:0007669"/>
    <property type="project" value="UniProtKB-SubCell"/>
</dbReference>
<dbReference type="GO" id="GO:0039654">
    <property type="term" value="P:fusion of virus membrane with host endosome membrane"/>
    <property type="evidence" value="ECO:0007669"/>
    <property type="project" value="UniProtKB-KW"/>
</dbReference>
<dbReference type="GO" id="GO:0046718">
    <property type="term" value="P:symbiont entry into host cell"/>
    <property type="evidence" value="ECO:0007669"/>
    <property type="project" value="UniProtKB-KW"/>
</dbReference>
<dbReference type="GO" id="GO:0044003">
    <property type="term" value="P:symbiont-mediated perturbation of host process"/>
    <property type="evidence" value="ECO:0007669"/>
    <property type="project" value="InterPro"/>
</dbReference>
<dbReference type="GO" id="GO:0019062">
    <property type="term" value="P:virion attachment to host cell"/>
    <property type="evidence" value="ECO:0007669"/>
    <property type="project" value="UniProtKB-KW"/>
</dbReference>
<dbReference type="InterPro" id="IPR005167">
    <property type="entry name" value="Bunya_G1"/>
</dbReference>
<dbReference type="InterPro" id="IPR014414">
    <property type="entry name" value="M_poly_TospoV"/>
</dbReference>
<dbReference type="Pfam" id="PF03557">
    <property type="entry name" value="Bunya_G1"/>
    <property type="match status" value="1"/>
</dbReference>
<dbReference type="PIRSF" id="PIRSF003960">
    <property type="entry name" value="M_poly_TospoV"/>
    <property type="match status" value="1"/>
</dbReference>
<feature type="propeptide" id="PRO_0000036868" evidence="3">
    <location>
        <begin position="1"/>
        <end position="8"/>
    </location>
</feature>
<feature type="chain" id="PRO_0000036869" description="Envelopment polyprotein">
    <location>
        <begin position="9"/>
        <end position="1110"/>
    </location>
</feature>
<feature type="chain" id="PRO_0000036870" description="Glycoprotein N" evidence="3">
    <location>
        <begin position="9"/>
        <end position="459"/>
    </location>
</feature>
<feature type="chain" id="PRO_0000036871" description="Glycoprotein C" evidence="3">
    <location>
        <begin position="460"/>
        <end position="1110"/>
    </location>
</feature>
<feature type="topological domain" description="Lumenal" evidence="3">
    <location>
        <begin position="1"/>
        <end position="290"/>
    </location>
</feature>
<feature type="transmembrane region" description="Helical" evidence="2">
    <location>
        <begin position="291"/>
        <end position="342"/>
    </location>
</feature>
<feature type="topological domain" description="Cytoplasmic" evidence="3">
    <location>
        <begin position="343"/>
        <end position="459"/>
    </location>
</feature>
<feature type="topological domain" description="Lumenal" evidence="3">
    <location>
        <begin position="460"/>
        <end position="1044"/>
    </location>
</feature>
<feature type="transmembrane region" description="Helical" evidence="3">
    <location>
        <begin position="1045"/>
        <end position="1065"/>
    </location>
</feature>
<feature type="topological domain" description="Cytoplasmic" evidence="3">
    <location>
        <begin position="1066"/>
        <end position="1110"/>
    </location>
</feature>
<feature type="region of interest" description="Non-covalent dimerization" evidence="2">
    <location>
        <begin position="153"/>
        <end position="171"/>
    </location>
</feature>
<feature type="region of interest" description="Disordered" evidence="4">
    <location>
        <begin position="1091"/>
        <end position="1110"/>
    </location>
</feature>
<feature type="short sequence motif" description="Cell attachment site" evidence="3">
    <location>
        <begin position="14"/>
        <end position="16"/>
    </location>
</feature>
<feature type="site" description="Cleavage; by host signal peptidase" evidence="2">
    <location>
        <begin position="459"/>
        <end position="460"/>
    </location>
</feature>
<feature type="glycosylation site" description="N-linked (GlcNAc...) asparagine; by host" evidence="3">
    <location>
        <position position="46"/>
    </location>
</feature>
<feature type="glycosylation site" description="N-linked (GlcNAc...) asparagine; by host" evidence="2">
    <location>
        <position position="92"/>
    </location>
</feature>
<feature type="glycosylation site" description="N-linked (GlcNAc...) asparagine; by host" evidence="2">
    <location>
        <position position="186"/>
    </location>
</feature>
<feature type="glycosylation site" description="N-linked (GlcNAc...) asparagine; by host" evidence="3">
    <location>
        <position position="566"/>
    </location>
</feature>
<feature type="glycosylation site" description="N-linked (GlcNAc...) asparagine; by host" evidence="3">
    <location>
        <position position="582"/>
    </location>
</feature>
<feature type="glycosylation site" description="N-linked (GlcNAc...) asparagine; by host" evidence="3">
    <location>
        <position position="957"/>
    </location>
</feature>
<feature type="disulfide bond" evidence="2">
    <location>
        <begin position="90"/>
        <end position="121"/>
    </location>
</feature>
<feature type="disulfide bond" evidence="2">
    <location>
        <begin position="98"/>
        <end position="132"/>
    </location>
</feature>
<feature type="disulfide bond" evidence="2">
    <location>
        <begin position="200"/>
        <end position="261"/>
    </location>
</feature>
<feature type="disulfide bond" description="Interchain" evidence="2">
    <location>
        <position position="278"/>
    </location>
</feature>
<proteinExistence type="inferred from homology"/>
<name>GP_INSV</name>
<sequence length="1110" mass="124868">MALKETDAKIHVERGDHPEIYDEAYYDRSVDHKNEILDTLAEMLQNATGKTLRPTRDTQTVLANNEVPQSSSGLSSTPTTISIMDLPNPCLNASSLTCSIKGVSTFNVYYQVESNGVIYSCISDTITKLGNCEGSSELPRSFETVPVVPITKIDNKRKLSIGTKFYIIESLENYNYPIMYNSRPTNGTVSLQSVKFSGDCKISKTNIVNSYTVSLTTPEKIMGYVVKREGSDMSHSIISFSGSVSLTFTEENMDGKHNLLCGDKSSKVPLVDKRVRDCIIKYSKNIYKQTACINFSWFRLIMIALIVYFPIRYLVNKTSKTLFYGYDLLGLITYPILLLINYLWSYFPLKCKVCGNLCLVTHECSKLCICNKNKASEEHSEECPIITRTAEKNKKYNWASIEWFHLIVNTKIGLSFLKAVTETLIGFLILSQMPMSMAQTAQCLDSCYYVPGCDRFVTNRYDKCPEKDQCFCAIKENSIVESNFLTNVVTEGPMDCIPYQECKGRITENALVTFVKCRFGCEYASIFQSKPLDNGFLEYSGDTLGLNAVNLHFMKRLRNGIIDFYNKTEKYGYISGDALKSNESDIPESIFPRKSLIFDSVIDGKYRYMIEESLLSGGGTVFSLNDKSSSTAQKFVVYIKKVRIQYDVSEQYTTAPIQSTHTDFFSTCTGKCSDCRKEQPITGYQDFCITPTSYWGCEEVWCLAINEGATCGFCRNVYDMDQSFRIYSVIKSTIKSEVCISGFVGAKCFTVSEEVPSESGYFQADILADFHNDGLTIGQLIAHGPDSHVYAGNIARLNNPSKMFGHPQLSHQGDPIFSKKTLDTNDLSWDCSAIGKKTITIKSCGYDTYRFKTGLNQISDIPVQFTDQNSFYMEKIFSLGKLKIVLDLPSELFKTVPKKPILSSVSLSCKGCFLCSQGLRCAASFISDITFSARLTMKQCSLSTYQIAVKKGANKYNLTMFCTSNPEKQKMIIEPEGDKSYSVEALVDSVAVLEPENIIDQNDQHAHEEQQYNSDTSVWSFWDYVKSPFNFIASHFGSFFDTVRVVLLILFVFALAYLCSIVATMCRGYVRNKSYKTKYIEDTNDYSLVSTSSGKDTITRRRPPLDFSGI</sequence>
<reference key="1">
    <citation type="journal article" date="1992" name="Virology">
        <title>The M RNA of impatiens necrotic spot Tospovirus (Bunyaviridae) has an ambisense genomic organization.</title>
        <authorList>
            <person name="Law M.D."/>
            <person name="Speck J."/>
            <person name="Moyer J.W."/>
        </authorList>
    </citation>
    <scope>NUCLEOTIDE SEQUENCE [GENOMIC RNA]</scope>
</reference>
<keyword id="KW-1015">Disulfide bond</keyword>
<keyword id="KW-1170">Fusion of virus membrane with host endosomal membrane</keyword>
<keyword id="KW-1168">Fusion of virus membrane with host membrane</keyword>
<keyword id="KW-0325">Glycoprotein</keyword>
<keyword id="KW-1038">Host endoplasmic reticulum</keyword>
<keyword id="KW-1040">Host Golgi apparatus</keyword>
<keyword id="KW-1043">Host membrane</keyword>
<keyword id="KW-0945">Host-virus interaction</keyword>
<keyword id="KW-0472">Membrane</keyword>
<keyword id="KW-0812">Transmembrane</keyword>
<keyword id="KW-1133">Transmembrane helix</keyword>
<keyword id="KW-1161">Viral attachment to host cell</keyword>
<keyword id="KW-1162">Viral penetration into host cytoplasm</keyword>
<keyword id="KW-0946">Virion</keyword>
<keyword id="KW-1160">Virus entry into host cell</keyword>
<accession>Q01260</accession>
<organism>
    <name type="scientific">Impatiens necrotic spot virus</name>
    <name type="common">INSV</name>
    <dbReference type="NCBI Taxonomy" id="11612"/>
    <lineage>
        <taxon>Viruses</taxon>
        <taxon>Riboviria</taxon>
        <taxon>Orthornavirae</taxon>
        <taxon>Negarnaviricota</taxon>
        <taxon>Polyploviricotina</taxon>
        <taxon>Ellioviricetes</taxon>
        <taxon>Bunyavirales</taxon>
        <taxon>Tospoviridae</taxon>
        <taxon>Orthotospovirus</taxon>
        <taxon>Orthotospovirus impatiensnecromaculae</taxon>
    </lineage>
</organism>
<organismHost>
    <name type="scientific">Impatiens</name>
    <dbReference type="NCBI Taxonomy" id="35939"/>
</organismHost>
<comment type="function">
    <molecule>Glycoprotein N</molecule>
    <text evidence="1 2">Forms the spikes present at the surface of the virion together with Glycoprotein C. They are able to attach the virion to a cell receptor and to promote fusion of membranes after endocytosis of the virion (By similarity). Plays a role in virus binding and/or entry into the vector midgut (By similarity).</text>
</comment>
<comment type="function">
    <molecule>Glycoprotein C</molecule>
    <text evidence="1 5">Forms the spikes present at the surface of the virion together with Glycoprotein N. They are able to attach the virion to a cell receptor and to promote fusion of membranes after endocytosis of the virion (By similarity). Probable class II fusion protein (Probable).</text>
</comment>
<comment type="subunit">
    <molecule>Glycoprotein N</molecule>
    <text evidence="2">Homodimer; disulfide-linked. Heterodimer with Glycoprotein C. Interacts with nucleoprotein.</text>
</comment>
<comment type="subunit">
    <molecule>Glycoprotein C</molecule>
    <text evidence="2">Heterodimer with Glycoprotein N. Interacts with nucleoprotein.</text>
</comment>
<comment type="subcellular location">
    <molecule>Glycoprotein N</molecule>
    <subcellularLocation>
        <location evidence="2">Virion membrane</location>
        <topology evidence="2">Single-pass type I membrane protein</topology>
    </subcellularLocation>
    <subcellularLocation>
        <location evidence="2">Host Golgi apparatus membrane</location>
        <topology evidence="2">Single-pass type I membrane protein</topology>
    </subcellularLocation>
    <subcellularLocation>
        <location evidence="2">Host endoplasmic reticulum membrane</location>
        <topology evidence="2">Single-pass type I membrane protein</topology>
    </subcellularLocation>
    <text evidence="2">Glycoprotein C alone is retained in the membrane of the endoplasmic reticulum, but not transported to the Golgi. Coexpression of Glycoprotein C and Glycoprotein N results in efficient transport of Glycoprotein C to the Golgi complex, indicating that their interaction is essential for proper targeting to this organelle, where virion budding occurs.</text>
</comment>
<comment type="subcellular location">
    <molecule>Glycoprotein C</molecule>
    <subcellularLocation>
        <location evidence="2">Virion membrane</location>
        <topology evidence="2">Single-pass type I membrane protein</topology>
    </subcellularLocation>
    <subcellularLocation>
        <location evidence="2">Host Golgi apparatus membrane</location>
        <topology evidence="2">Single-pass type I membrane protein</topology>
    </subcellularLocation>
    <text evidence="2">Inserted into the ER membrane, but is not transported to the Golgi without Glycoprotein N.</text>
</comment>
<comment type="domain">
    <text evidence="2">The cell attachment site present in these glycoproteins may help in the adhesion of virus to cells.</text>
</comment>
<comment type="domain">
    <molecule>Glycoprotein N</molecule>
    <text evidence="2">The cytoplasmic C-terminus probably contains a Golgi retention signal. The transmembrane domain and C-terminus of Glycoprotein N allow Glycoprotein C to exit the ER and traffic to the Golgi.</text>
</comment>
<comment type="PTM">
    <molecule>Envelopment polyprotein</molecule>
    <text evidence="2">Specific enzymatic cleavages in vivo yield mature proteins including Glycoprotein N and Glycoprotein C.</text>
</comment>
<comment type="PTM">
    <molecule>Glycoprotein N</molecule>
    <text evidence="2">Glycosylated with O-linked glycans. Glycosylation is essential for proper subcellular location.</text>
</comment>
<comment type="PTM">
    <molecule>Glycoprotein C</molecule>
    <text evidence="2">Cleaved at acidic pH.</text>
</comment>
<comment type="similarity">
    <text evidence="5">Belongs to the tospovirus envelope glycoprotein family.</text>
</comment>
<protein>
    <recommendedName>
        <fullName>Envelopment polyprotein</fullName>
    </recommendedName>
    <alternativeName>
        <fullName>M polyprotein</fullName>
    </alternativeName>
    <component>
        <recommendedName>
            <fullName evidence="2">Glycoprotein N</fullName>
            <shortName>Gn</shortName>
        </recommendedName>
        <alternativeName>
            <fullName>Glycoprotein G1</fullName>
        </alternativeName>
    </component>
    <component>
        <recommendedName>
            <fullName evidence="2">Glycoprotein C</fullName>
            <shortName>Gc</shortName>
        </recommendedName>
        <alternativeName>
            <fullName>Glycoprotein G2</fullName>
        </alternativeName>
    </component>
</protein>
<evidence type="ECO:0000250" key="1">
    <source>
        <dbReference type="UniProtKB" id="P08668"/>
    </source>
</evidence>
<evidence type="ECO:0000250" key="2">
    <source>
        <dbReference type="UniProtKB" id="P36291"/>
    </source>
</evidence>
<evidence type="ECO:0000255" key="3"/>
<evidence type="ECO:0000256" key="4">
    <source>
        <dbReference type="SAM" id="MobiDB-lite"/>
    </source>
</evidence>
<evidence type="ECO:0000305" key="5"/>
<gene>
    <name type="primary">GP</name>
</gene>